<evidence type="ECO:0000255" key="1">
    <source>
        <dbReference type="HAMAP-Rule" id="MF_01147"/>
    </source>
</evidence>
<name>LGT_BURCJ</name>
<dbReference type="EC" id="2.5.1.145" evidence="1"/>
<dbReference type="EMBL" id="AM747720">
    <property type="protein sequence ID" value="CAR52971.1"/>
    <property type="molecule type" value="Genomic_DNA"/>
</dbReference>
<dbReference type="RefSeq" id="WP_006484447.1">
    <property type="nucleotide sequence ID" value="NC_011000.1"/>
</dbReference>
<dbReference type="SMR" id="B4E8G3"/>
<dbReference type="KEGG" id="bcj:BCAL2670"/>
<dbReference type="eggNOG" id="COG0682">
    <property type="taxonomic scope" value="Bacteria"/>
</dbReference>
<dbReference type="HOGENOM" id="CLU_013386_1_0_4"/>
<dbReference type="BioCyc" id="BCEN216591:G1G1V-2958-MONOMER"/>
<dbReference type="UniPathway" id="UPA00664"/>
<dbReference type="Proteomes" id="UP000001035">
    <property type="component" value="Chromosome 1"/>
</dbReference>
<dbReference type="GO" id="GO:0005886">
    <property type="term" value="C:plasma membrane"/>
    <property type="evidence" value="ECO:0007669"/>
    <property type="project" value="UniProtKB-SubCell"/>
</dbReference>
<dbReference type="GO" id="GO:0008961">
    <property type="term" value="F:phosphatidylglycerol-prolipoprotein diacylglyceryl transferase activity"/>
    <property type="evidence" value="ECO:0007669"/>
    <property type="project" value="UniProtKB-UniRule"/>
</dbReference>
<dbReference type="GO" id="GO:0042158">
    <property type="term" value="P:lipoprotein biosynthetic process"/>
    <property type="evidence" value="ECO:0007669"/>
    <property type="project" value="UniProtKB-UniRule"/>
</dbReference>
<dbReference type="HAMAP" id="MF_01147">
    <property type="entry name" value="Lgt"/>
    <property type="match status" value="1"/>
</dbReference>
<dbReference type="InterPro" id="IPR001640">
    <property type="entry name" value="Lgt"/>
</dbReference>
<dbReference type="NCBIfam" id="TIGR00544">
    <property type="entry name" value="lgt"/>
    <property type="match status" value="1"/>
</dbReference>
<dbReference type="PANTHER" id="PTHR30589:SF0">
    <property type="entry name" value="PHOSPHATIDYLGLYCEROL--PROLIPOPROTEIN DIACYLGLYCERYL TRANSFERASE"/>
    <property type="match status" value="1"/>
</dbReference>
<dbReference type="PANTHER" id="PTHR30589">
    <property type="entry name" value="PROLIPOPROTEIN DIACYLGLYCERYL TRANSFERASE"/>
    <property type="match status" value="1"/>
</dbReference>
<dbReference type="Pfam" id="PF01790">
    <property type="entry name" value="LGT"/>
    <property type="match status" value="1"/>
</dbReference>
<dbReference type="PROSITE" id="PS01311">
    <property type="entry name" value="LGT"/>
    <property type="match status" value="1"/>
</dbReference>
<organism>
    <name type="scientific">Burkholderia cenocepacia (strain ATCC BAA-245 / DSM 16553 / LMG 16656 / NCTC 13227 / J2315 / CF5610)</name>
    <name type="common">Burkholderia cepacia (strain J2315)</name>
    <dbReference type="NCBI Taxonomy" id="216591"/>
    <lineage>
        <taxon>Bacteria</taxon>
        <taxon>Pseudomonadati</taxon>
        <taxon>Pseudomonadota</taxon>
        <taxon>Betaproteobacteria</taxon>
        <taxon>Burkholderiales</taxon>
        <taxon>Burkholderiaceae</taxon>
        <taxon>Burkholderia</taxon>
        <taxon>Burkholderia cepacia complex</taxon>
    </lineage>
</organism>
<comment type="function">
    <text evidence="1">Catalyzes the transfer of the diacylglyceryl group from phosphatidylglycerol to the sulfhydryl group of the N-terminal cysteine of a prolipoprotein, the first step in the formation of mature lipoproteins.</text>
</comment>
<comment type="catalytic activity">
    <reaction evidence="1">
        <text>L-cysteinyl-[prolipoprotein] + a 1,2-diacyl-sn-glycero-3-phospho-(1'-sn-glycerol) = an S-1,2-diacyl-sn-glyceryl-L-cysteinyl-[prolipoprotein] + sn-glycerol 1-phosphate + H(+)</text>
        <dbReference type="Rhea" id="RHEA:56712"/>
        <dbReference type="Rhea" id="RHEA-COMP:14679"/>
        <dbReference type="Rhea" id="RHEA-COMP:14680"/>
        <dbReference type="ChEBI" id="CHEBI:15378"/>
        <dbReference type="ChEBI" id="CHEBI:29950"/>
        <dbReference type="ChEBI" id="CHEBI:57685"/>
        <dbReference type="ChEBI" id="CHEBI:64716"/>
        <dbReference type="ChEBI" id="CHEBI:140658"/>
        <dbReference type="EC" id="2.5.1.145"/>
    </reaction>
</comment>
<comment type="pathway">
    <text evidence="1">Protein modification; lipoprotein biosynthesis (diacylglyceryl transfer).</text>
</comment>
<comment type="subcellular location">
    <subcellularLocation>
        <location evidence="1">Cell inner membrane</location>
        <topology evidence="1">Multi-pass membrane protein</topology>
    </subcellularLocation>
</comment>
<comment type="similarity">
    <text evidence="1">Belongs to the Lgt family.</text>
</comment>
<sequence>MIIHPNFDPVAIHLGPLAVRWYGLMYLVGFIAAIVVGRIRLKLPYVAAQGWTAKDIDDMMFYGVLGTVLGGRLGYVLFYKADFYFSHPLDVFKVWEGGMSFHGGFLGVTLAMMLFAWQRKRHWLQVTDFVAPMVPTGLAAGRLGNFINGELWGRVTDPTAPWAMLFPGAMRDDAAWLPKHPALVEKWHLADVFMQYQMLPRHPSQLYEIALEGIALFFVLFLFARKPRPMGAISALFLIGYGLARFTVEFAREPDDFLGLLALGLSMGQWLSLPMIVAGVAMMVWAYRRRAANANAAA</sequence>
<accession>B4E8G3</accession>
<reference key="1">
    <citation type="journal article" date="2009" name="J. Bacteriol.">
        <title>The genome of Burkholderia cenocepacia J2315, an epidemic pathogen of cystic fibrosis patients.</title>
        <authorList>
            <person name="Holden M.T."/>
            <person name="Seth-Smith H.M."/>
            <person name="Crossman L.C."/>
            <person name="Sebaihia M."/>
            <person name="Bentley S.D."/>
            <person name="Cerdeno-Tarraga A.M."/>
            <person name="Thomson N.R."/>
            <person name="Bason N."/>
            <person name="Quail M.A."/>
            <person name="Sharp S."/>
            <person name="Cherevach I."/>
            <person name="Churcher C."/>
            <person name="Goodhead I."/>
            <person name="Hauser H."/>
            <person name="Holroyd N."/>
            <person name="Mungall K."/>
            <person name="Scott P."/>
            <person name="Walker D."/>
            <person name="White B."/>
            <person name="Rose H."/>
            <person name="Iversen P."/>
            <person name="Mil-Homens D."/>
            <person name="Rocha E.P."/>
            <person name="Fialho A.M."/>
            <person name="Baldwin A."/>
            <person name="Dowson C."/>
            <person name="Barrell B.G."/>
            <person name="Govan J.R."/>
            <person name="Vandamme P."/>
            <person name="Hart C.A."/>
            <person name="Mahenthiralingam E."/>
            <person name="Parkhill J."/>
        </authorList>
    </citation>
    <scope>NUCLEOTIDE SEQUENCE [LARGE SCALE GENOMIC DNA]</scope>
    <source>
        <strain>ATCC BAA-245 / DSM 16553 / LMG 16656 / NCTC 13227 / J2315 / CF5610</strain>
    </source>
</reference>
<feature type="chain" id="PRO_1000137409" description="Phosphatidylglycerol--prolipoprotein diacylglyceryl transferase">
    <location>
        <begin position="1"/>
        <end position="298"/>
    </location>
</feature>
<feature type="transmembrane region" description="Helical" evidence="1">
    <location>
        <begin position="17"/>
        <end position="37"/>
    </location>
</feature>
<feature type="transmembrane region" description="Helical" evidence="1">
    <location>
        <begin position="59"/>
        <end position="79"/>
    </location>
</feature>
<feature type="transmembrane region" description="Helical" evidence="1">
    <location>
        <begin position="97"/>
        <end position="117"/>
    </location>
</feature>
<feature type="transmembrane region" description="Helical" evidence="1">
    <location>
        <begin position="230"/>
        <end position="250"/>
    </location>
</feature>
<feature type="transmembrane region" description="Helical" evidence="1">
    <location>
        <begin position="257"/>
        <end position="277"/>
    </location>
</feature>
<feature type="binding site" evidence="1">
    <location>
        <position position="142"/>
    </location>
    <ligand>
        <name>a 1,2-diacyl-sn-glycero-3-phospho-(1'-sn-glycerol)</name>
        <dbReference type="ChEBI" id="CHEBI:64716"/>
    </ligand>
</feature>
<keyword id="KW-0997">Cell inner membrane</keyword>
<keyword id="KW-1003">Cell membrane</keyword>
<keyword id="KW-0472">Membrane</keyword>
<keyword id="KW-0808">Transferase</keyword>
<keyword id="KW-0812">Transmembrane</keyword>
<keyword id="KW-1133">Transmembrane helix</keyword>
<gene>
    <name evidence="1" type="primary">lgt</name>
    <name type="ordered locus">BceJ2315_26090</name>
    <name type="ORF">BCAL2670</name>
</gene>
<protein>
    <recommendedName>
        <fullName evidence="1">Phosphatidylglycerol--prolipoprotein diacylglyceryl transferase</fullName>
        <ecNumber evidence="1">2.5.1.145</ecNumber>
    </recommendedName>
</protein>
<proteinExistence type="inferred from homology"/>